<organism>
    <name type="scientific">Hylobates lar</name>
    <name type="common">Lar gibbon</name>
    <name type="synonym">White-handed gibbon</name>
    <dbReference type="NCBI Taxonomy" id="9580"/>
    <lineage>
        <taxon>Eukaryota</taxon>
        <taxon>Metazoa</taxon>
        <taxon>Chordata</taxon>
        <taxon>Craniata</taxon>
        <taxon>Vertebrata</taxon>
        <taxon>Euteleostomi</taxon>
        <taxon>Mammalia</taxon>
        <taxon>Eutheria</taxon>
        <taxon>Euarchontoglires</taxon>
        <taxon>Primates</taxon>
        <taxon>Haplorrhini</taxon>
        <taxon>Catarrhini</taxon>
        <taxon>Hylobatidae</taxon>
        <taxon>Hylobates</taxon>
    </lineage>
</organism>
<keyword id="KW-0249">Electron transport</keyword>
<keyword id="KW-0472">Membrane</keyword>
<keyword id="KW-0496">Mitochondrion</keyword>
<keyword id="KW-0999">Mitochondrion inner membrane</keyword>
<keyword id="KW-0520">NAD</keyword>
<keyword id="KW-0679">Respiratory chain</keyword>
<keyword id="KW-1278">Translocase</keyword>
<keyword id="KW-0812">Transmembrane</keyword>
<keyword id="KW-1133">Transmembrane helix</keyword>
<keyword id="KW-0813">Transport</keyword>
<keyword id="KW-0830">Ubiquinone</keyword>
<gene>
    <name type="primary">MT-ND1</name>
    <name type="synonym">MTND1</name>
    <name type="synonym">NADH1</name>
    <name type="synonym">ND1</name>
</gene>
<reference key="1">
    <citation type="journal article" date="1996" name="Hereditas">
        <title>A complete mitochondrial DNA molecule of the white-handed gibbon, Hylobates lar, and comparison among individual mitochondrial genes of all hominoid genera.</title>
        <authorList>
            <person name="Arnason U."/>
            <person name="Gullberg A."/>
            <person name="Xu X."/>
        </authorList>
    </citation>
    <scope>NUCLEOTIDE SEQUENCE [GENOMIC DNA]</scope>
    <source>
        <strain>Isolate Ester</strain>
    </source>
</reference>
<geneLocation type="mitochondrion"/>
<comment type="function">
    <text evidence="1">Core subunit of the mitochondrial membrane respiratory chain NADH dehydrogenase (Complex I) which catalyzes electron transfer from NADH through the respiratory chain, using ubiquinone as an electron acceptor. Essential for the catalytic activity and assembly of complex I.</text>
</comment>
<comment type="catalytic activity">
    <reaction evidence="1">
        <text>a ubiquinone + NADH + 5 H(+)(in) = a ubiquinol + NAD(+) + 4 H(+)(out)</text>
        <dbReference type="Rhea" id="RHEA:29091"/>
        <dbReference type="Rhea" id="RHEA-COMP:9565"/>
        <dbReference type="Rhea" id="RHEA-COMP:9566"/>
        <dbReference type="ChEBI" id="CHEBI:15378"/>
        <dbReference type="ChEBI" id="CHEBI:16389"/>
        <dbReference type="ChEBI" id="CHEBI:17976"/>
        <dbReference type="ChEBI" id="CHEBI:57540"/>
        <dbReference type="ChEBI" id="CHEBI:57945"/>
        <dbReference type="EC" id="7.1.1.2"/>
    </reaction>
</comment>
<comment type="subunit">
    <text evidence="2">Core subunit of respiratory chain NADH dehydrogenase (Complex I) which is composed of 45 different subunits.</text>
</comment>
<comment type="subcellular location">
    <subcellularLocation>
        <location evidence="2">Mitochondrion inner membrane</location>
        <topology evidence="3">Multi-pass membrane protein</topology>
    </subcellularLocation>
</comment>
<comment type="similarity">
    <text evidence="4">Belongs to the complex I subunit 1 family.</text>
</comment>
<feature type="chain" id="PRO_0000117415" description="NADH-ubiquinone oxidoreductase chain 1">
    <location>
        <begin position="1"/>
        <end position="318"/>
    </location>
</feature>
<feature type="transmembrane region" description="Helical" evidence="3">
    <location>
        <begin position="2"/>
        <end position="22"/>
    </location>
</feature>
<feature type="transmembrane region" description="Helical" evidence="3">
    <location>
        <begin position="69"/>
        <end position="89"/>
    </location>
</feature>
<feature type="transmembrane region" description="Helical" evidence="3">
    <location>
        <begin position="100"/>
        <end position="120"/>
    </location>
</feature>
<feature type="transmembrane region" description="Helical" evidence="3">
    <location>
        <begin position="147"/>
        <end position="167"/>
    </location>
</feature>
<feature type="transmembrane region" description="Helical" evidence="3">
    <location>
        <begin position="171"/>
        <end position="191"/>
    </location>
</feature>
<feature type="transmembrane region" description="Helical" evidence="3">
    <location>
        <begin position="222"/>
        <end position="242"/>
    </location>
</feature>
<feature type="transmembrane region" description="Helical" evidence="3">
    <location>
        <begin position="253"/>
        <end position="273"/>
    </location>
</feature>
<feature type="transmembrane region" description="Helical" evidence="3">
    <location>
        <begin position="294"/>
        <end position="314"/>
    </location>
</feature>
<evidence type="ECO:0000250" key="1">
    <source>
        <dbReference type="UniProtKB" id="P03886"/>
    </source>
</evidence>
<evidence type="ECO:0000250" key="2">
    <source>
        <dbReference type="UniProtKB" id="P03887"/>
    </source>
</evidence>
<evidence type="ECO:0000255" key="3"/>
<evidence type="ECO:0000305" key="4"/>
<dbReference type="EC" id="7.1.1.2" evidence="1"/>
<dbReference type="EMBL" id="X99256">
    <property type="protein sequence ID" value="CAA67628.1"/>
    <property type="molecule type" value="Genomic_DNA"/>
</dbReference>
<dbReference type="PIR" id="T11833">
    <property type="entry name" value="T11833"/>
</dbReference>
<dbReference type="RefSeq" id="NP_007822.1">
    <property type="nucleotide sequence ID" value="NC_002082.1"/>
</dbReference>
<dbReference type="SMR" id="Q96126"/>
<dbReference type="GeneID" id="808461"/>
<dbReference type="CTD" id="4535"/>
<dbReference type="GO" id="GO:0005743">
    <property type="term" value="C:mitochondrial inner membrane"/>
    <property type="evidence" value="ECO:0000250"/>
    <property type="project" value="UniProtKB"/>
</dbReference>
<dbReference type="GO" id="GO:0008137">
    <property type="term" value="F:NADH dehydrogenase (ubiquinone) activity"/>
    <property type="evidence" value="ECO:0000250"/>
    <property type="project" value="UniProtKB"/>
</dbReference>
<dbReference type="GO" id="GO:0006120">
    <property type="term" value="P:mitochondrial electron transport, NADH to ubiquinone"/>
    <property type="evidence" value="ECO:0000250"/>
    <property type="project" value="UniProtKB"/>
</dbReference>
<dbReference type="GO" id="GO:0032981">
    <property type="term" value="P:mitochondrial respiratory chain complex I assembly"/>
    <property type="evidence" value="ECO:0000250"/>
    <property type="project" value="UniProtKB"/>
</dbReference>
<dbReference type="HAMAP" id="MF_01350">
    <property type="entry name" value="NDH1_NuoH"/>
    <property type="match status" value="1"/>
</dbReference>
<dbReference type="InterPro" id="IPR001694">
    <property type="entry name" value="NADH_UbQ_OxRdtase_su1/FPO"/>
</dbReference>
<dbReference type="InterPro" id="IPR018086">
    <property type="entry name" value="NADH_UbQ_OxRdtase_su1_CS"/>
</dbReference>
<dbReference type="PANTHER" id="PTHR11432">
    <property type="entry name" value="NADH DEHYDROGENASE SUBUNIT 1"/>
    <property type="match status" value="1"/>
</dbReference>
<dbReference type="PANTHER" id="PTHR11432:SF3">
    <property type="entry name" value="NADH-UBIQUINONE OXIDOREDUCTASE CHAIN 1"/>
    <property type="match status" value="1"/>
</dbReference>
<dbReference type="Pfam" id="PF00146">
    <property type="entry name" value="NADHdh"/>
    <property type="match status" value="1"/>
</dbReference>
<dbReference type="PROSITE" id="PS00667">
    <property type="entry name" value="COMPLEX1_ND1_1"/>
    <property type="match status" value="1"/>
</dbReference>
<dbReference type="PROSITE" id="PS00668">
    <property type="entry name" value="COMPLEX1_ND1_2"/>
    <property type="match status" value="1"/>
</dbReference>
<sequence length="318" mass="35815">MPMINLLLLILPTLIAMAFLMLTERKILGYTQLRKGPNIVGPYGLLQPFADAMKLFTKEPLKPSTSTTALYIIAPTLALTIALLLWTPLPMPNPLINLNLGLLFILATSSLTVYSILWSGWASNSNYALIGALRAVAQTISYEVTSAIILLSVLLMSGSFNLSTLITTQEHIWLLLPTWPLAMMWFISTLAETNRTPFDLTEGESELVSGFNTEYAAGPFALFFMAEYVNIIMMNALTTMIFLGTTHNAHRPELYTTCFTIKTLLLTSLFLWIRTTYPRFRYDQLMYLLWKNFLPLTLTLLMWYISLSTMIASIPPQT</sequence>
<accession>Q96126</accession>
<name>NU1M_HYLLA</name>
<protein>
    <recommendedName>
        <fullName>NADH-ubiquinone oxidoreductase chain 1</fullName>
        <ecNumber evidence="1">7.1.1.2</ecNumber>
    </recommendedName>
    <alternativeName>
        <fullName>NADH dehydrogenase subunit 1</fullName>
    </alternativeName>
</protein>
<proteinExistence type="inferred from homology"/>